<feature type="signal peptide" evidence="2">
    <location>
        <begin position="1"/>
        <end position="22"/>
    </location>
</feature>
<feature type="chain" id="PRO_0000429664" description="Endo-1,4-beta-xylanase S20">
    <location>
        <begin position="23"/>
        <end position="335"/>
    </location>
</feature>
<feature type="domain" description="GH11" evidence="4">
    <location>
        <begin position="39"/>
        <end position="241"/>
    </location>
</feature>
<feature type="domain" description="CBM1" evidence="3">
    <location>
        <begin position="300"/>
        <end position="335"/>
    </location>
</feature>
<feature type="region of interest" description="Disordered" evidence="6">
    <location>
        <begin position="251"/>
        <end position="291"/>
    </location>
</feature>
<feature type="compositionally biased region" description="Low complexity" evidence="6">
    <location>
        <begin position="257"/>
        <end position="291"/>
    </location>
</feature>
<feature type="active site" description="Nucleophile" evidence="5">
    <location>
        <position position="134"/>
    </location>
</feature>
<feature type="active site" description="Proton donor" evidence="1">
    <location>
        <position position="228"/>
    </location>
</feature>
<feature type="glycosylation site" description="N-linked (GlcNAc...) asparagine" evidence="2">
    <location>
        <position position="42"/>
    </location>
</feature>
<feature type="glycosylation site" description="N-linked (GlcNAc...) asparagine" evidence="2">
    <location>
        <position position="78"/>
    </location>
</feature>
<feature type="glycosylation site" description="N-linked (GlcNAc...) asparagine" evidence="2">
    <location>
        <position position="202"/>
    </location>
</feature>
<feature type="glycosylation site" description="N-linked (GlcNAc...) asparagine" evidence="2">
    <location>
        <position position="251"/>
    </location>
</feature>
<sequence length="335" mass="36094">MLRKLVTGALAAALLLSGQSNAQNACQQTQQLSGGRTINNKNETGNGNGNYKYEIWRDGNGGSLTLYPKDAAFKASWNNSGDFLGRVGLTFNKPAATNLGGDLIANYNYKKSGSDGGTYSYIGIYGWMDNPQIEYYVVDDWMHNRGAPGGSYMGSQKGTITVDGGTYKVWSGQRTGASKWGTSTFTQIFSIRTSPRQCGSINVSEHFRQWQKLGLRLGGLMEAQLLAESGGGSGYVDFTYATITIGGSSSNASAPSNNNNNNNNNNDNNGNWNNWNNNNNNNNNNNNNNNNNNNNQGGGNCAAIWGQCGGSGYNGPKCCKQGSCKQINQWYSQCQ</sequence>
<reference key="1">
    <citation type="journal article" date="2008" name="Appl. Microbiol. Biotechnol.">
        <title>Cloning of a rumen fungal xylanase gene and purification of the recombinant enzyme via artificial oil bodies.</title>
        <authorList>
            <person name="Liu J.R."/>
            <person name="Duan C.H."/>
            <person name="Zhao X."/>
            <person name="Tzen J.T."/>
            <person name="Cheng K.J."/>
            <person name="Pai C.K."/>
        </authorList>
    </citation>
    <scope>NUCLEOTIDE SEQUENCE [MRNA]</scope>
    <scope>SUBCELLULAR LOCATION</scope>
    <scope>FUNCTION</scope>
    <scope>CATALYTIC ACTIVITY</scope>
    <scope>BIOPHISICOCHEMICAL PROPERTIES</scope>
    <source>
        <strain>S20</strain>
    </source>
</reference>
<keyword id="KW-0119">Carbohydrate metabolism</keyword>
<keyword id="KW-0325">Glycoprotein</keyword>
<keyword id="KW-0326">Glycosidase</keyword>
<keyword id="KW-0378">Hydrolase</keyword>
<keyword id="KW-0624">Polysaccharide degradation</keyword>
<keyword id="KW-0964">Secreted</keyword>
<keyword id="KW-0732">Signal</keyword>
<keyword id="KW-0858">Xylan degradation</keyword>
<comment type="function">
    <text evidence="7">Endo-1,4-beta-xylanase involved in the hydrolysis of xylan, a major structural heterogeneous polysaccharide found in plant biomass representing the second most abundant polysaccharide in the biosphere, after cellulose.</text>
</comment>
<comment type="catalytic activity">
    <reaction evidence="7">
        <text>Endohydrolysis of (1-&gt;4)-beta-D-xylosidic linkages in xylans.</text>
        <dbReference type="EC" id="3.2.1.8"/>
    </reaction>
</comment>
<comment type="biophysicochemical properties">
    <kinetics>
        <KM>4.9 mg/ml for oat spelt xylan</KM>
        <Vmax>3.886 umol/min/mg enzyme toward oat spelt xylan</Vmax>
    </kinetics>
    <phDependence>
        <text>Optimum pH is 6.0.</text>
    </phDependence>
    <temperatureDependence>
        <text>Optimum temperature is 45 degrees Celsius.</text>
    </temperatureDependence>
</comment>
<comment type="pathway">
    <text>Glycan degradation; xylan degradation.</text>
</comment>
<comment type="subcellular location">
    <subcellularLocation>
        <location evidence="7">Secreted</location>
    </subcellularLocation>
</comment>
<comment type="similarity">
    <text evidence="8">Belongs to the glycosyl hydrolase 11 (cellulase G) family.</text>
</comment>
<accession>A8TGA1</accession>
<proteinExistence type="evidence at protein level"/>
<evidence type="ECO:0000250" key="1"/>
<evidence type="ECO:0000255" key="2"/>
<evidence type="ECO:0000255" key="3">
    <source>
        <dbReference type="PROSITE-ProRule" id="PRU00597"/>
    </source>
</evidence>
<evidence type="ECO:0000255" key="4">
    <source>
        <dbReference type="PROSITE-ProRule" id="PRU01097"/>
    </source>
</evidence>
<evidence type="ECO:0000255" key="5">
    <source>
        <dbReference type="PROSITE-ProRule" id="PRU10062"/>
    </source>
</evidence>
<evidence type="ECO:0000256" key="6">
    <source>
        <dbReference type="SAM" id="MobiDB-lite"/>
    </source>
</evidence>
<evidence type="ECO:0000269" key="7">
    <source>
    </source>
</evidence>
<evidence type="ECO:0000305" key="8"/>
<name>XYS20_NEOPA</name>
<organism>
    <name type="scientific">Neocallimastix patriciarum</name>
    <name type="common">Rumen fungus</name>
    <dbReference type="NCBI Taxonomy" id="4758"/>
    <lineage>
        <taxon>Eukaryota</taxon>
        <taxon>Fungi</taxon>
        <taxon>Fungi incertae sedis</taxon>
        <taxon>Chytridiomycota</taxon>
        <taxon>Chytridiomycota incertae sedis</taxon>
        <taxon>Neocallimastigomycetes</taxon>
        <taxon>Neocallimastigales</taxon>
        <taxon>Neocallimastigaceae</taxon>
        <taxon>Neocallimastix</taxon>
    </lineage>
</organism>
<protein>
    <recommendedName>
        <fullName>Endo-1,4-beta-xylanase S20</fullName>
        <shortName>Xylanase S20</shortName>
        <ecNumber>3.2.1.8</ecNumber>
    </recommendedName>
    <alternativeName>
        <fullName>1,4-beta-D-xylan xylanohydrolase S20</fullName>
    </alternativeName>
</protein>
<dbReference type="EC" id="3.2.1.8"/>
<dbReference type="EMBL" id="EU030626">
    <property type="protein sequence ID" value="ABW04217.1"/>
    <property type="molecule type" value="mRNA"/>
</dbReference>
<dbReference type="SMR" id="A8TGA1"/>
<dbReference type="CAZy" id="CBM1">
    <property type="family name" value="Carbohydrate-Binding Module Family 1"/>
</dbReference>
<dbReference type="CAZy" id="GH11">
    <property type="family name" value="Glycoside Hydrolase Family 11"/>
</dbReference>
<dbReference type="GlyCosmos" id="A8TGA1">
    <property type="glycosylation" value="4 sites, No reported glycans"/>
</dbReference>
<dbReference type="BRENDA" id="3.2.1.8">
    <property type="organism ID" value="6834"/>
</dbReference>
<dbReference type="UniPathway" id="UPA00114"/>
<dbReference type="GO" id="GO:0005576">
    <property type="term" value="C:extracellular region"/>
    <property type="evidence" value="ECO:0007669"/>
    <property type="project" value="UniProtKB-SubCell"/>
</dbReference>
<dbReference type="GO" id="GO:0030248">
    <property type="term" value="F:cellulose binding"/>
    <property type="evidence" value="ECO:0007669"/>
    <property type="project" value="InterPro"/>
</dbReference>
<dbReference type="GO" id="GO:0031176">
    <property type="term" value="F:endo-1,4-beta-xylanase activity"/>
    <property type="evidence" value="ECO:0007669"/>
    <property type="project" value="UniProtKB-EC"/>
</dbReference>
<dbReference type="GO" id="GO:0045493">
    <property type="term" value="P:xylan catabolic process"/>
    <property type="evidence" value="ECO:0007669"/>
    <property type="project" value="UniProtKB-UniPathway"/>
</dbReference>
<dbReference type="Gene3D" id="2.60.120.180">
    <property type="match status" value="1"/>
</dbReference>
<dbReference type="InterPro" id="IPR035971">
    <property type="entry name" value="CBD_sf"/>
</dbReference>
<dbReference type="InterPro" id="IPR000254">
    <property type="entry name" value="Cellulose-bd_dom_fun"/>
</dbReference>
<dbReference type="InterPro" id="IPR013320">
    <property type="entry name" value="ConA-like_dom_sf"/>
</dbReference>
<dbReference type="InterPro" id="IPR013319">
    <property type="entry name" value="GH11/12"/>
</dbReference>
<dbReference type="InterPro" id="IPR018208">
    <property type="entry name" value="GH11_AS_1"/>
</dbReference>
<dbReference type="InterPro" id="IPR033123">
    <property type="entry name" value="GH11_dom"/>
</dbReference>
<dbReference type="InterPro" id="IPR001137">
    <property type="entry name" value="Glyco_hydro_11"/>
</dbReference>
<dbReference type="PANTHER" id="PTHR46828">
    <property type="entry name" value="ENDO-1,4-BETA-XYLANASE A-RELATED"/>
    <property type="match status" value="1"/>
</dbReference>
<dbReference type="PANTHER" id="PTHR46828:SF2">
    <property type="entry name" value="ENDO-1,4-BETA-XYLANASE A-RELATED"/>
    <property type="match status" value="1"/>
</dbReference>
<dbReference type="Pfam" id="PF00734">
    <property type="entry name" value="CBM_1"/>
    <property type="match status" value="1"/>
</dbReference>
<dbReference type="Pfam" id="PF00457">
    <property type="entry name" value="Glyco_hydro_11"/>
    <property type="match status" value="1"/>
</dbReference>
<dbReference type="PRINTS" id="PR00911">
    <property type="entry name" value="GLHYDRLASE11"/>
</dbReference>
<dbReference type="SMART" id="SM00236">
    <property type="entry name" value="fCBD"/>
    <property type="match status" value="1"/>
</dbReference>
<dbReference type="SUPFAM" id="SSF57180">
    <property type="entry name" value="Cellulose-binding domain"/>
    <property type="match status" value="1"/>
</dbReference>
<dbReference type="SUPFAM" id="SSF49899">
    <property type="entry name" value="Concanavalin A-like lectins/glucanases"/>
    <property type="match status" value="1"/>
</dbReference>
<dbReference type="PROSITE" id="PS00562">
    <property type="entry name" value="CBM1_1"/>
    <property type="match status" value="1"/>
</dbReference>
<dbReference type="PROSITE" id="PS51164">
    <property type="entry name" value="CBM1_2"/>
    <property type="match status" value="1"/>
</dbReference>
<dbReference type="PROSITE" id="PS00776">
    <property type="entry name" value="GH11_1"/>
    <property type="match status" value="1"/>
</dbReference>
<dbReference type="PROSITE" id="PS51761">
    <property type="entry name" value="GH11_3"/>
    <property type="match status" value="1"/>
</dbReference>
<gene>
    <name type="primary">xynS20</name>
</gene>